<organism>
    <name type="scientific">Rhodococcus opacus (strain B4)</name>
    <dbReference type="NCBI Taxonomy" id="632772"/>
    <lineage>
        <taxon>Bacteria</taxon>
        <taxon>Bacillati</taxon>
        <taxon>Actinomycetota</taxon>
        <taxon>Actinomycetes</taxon>
        <taxon>Mycobacteriales</taxon>
        <taxon>Nocardiaceae</taxon>
        <taxon>Rhodococcus</taxon>
    </lineage>
</organism>
<accession>C1ASP6</accession>
<dbReference type="EMBL" id="AP011115">
    <property type="protein sequence ID" value="BAH48828.1"/>
    <property type="molecule type" value="Genomic_DNA"/>
</dbReference>
<dbReference type="RefSeq" id="WP_012687835.1">
    <property type="nucleotide sequence ID" value="NC_012522.1"/>
</dbReference>
<dbReference type="SMR" id="C1ASP6"/>
<dbReference type="STRING" id="632772.ROP_05810"/>
<dbReference type="MEROPS" id="T01.980"/>
<dbReference type="KEGG" id="rop:ROP_05810"/>
<dbReference type="PATRIC" id="fig|632772.20.peg.639"/>
<dbReference type="HOGENOM" id="CLU_071031_0_0_11"/>
<dbReference type="OrthoDB" id="9775643at2"/>
<dbReference type="UniPathway" id="UPA00997"/>
<dbReference type="Proteomes" id="UP000002212">
    <property type="component" value="Chromosome"/>
</dbReference>
<dbReference type="GO" id="GO:0005737">
    <property type="term" value="C:cytoplasm"/>
    <property type="evidence" value="ECO:0007669"/>
    <property type="project" value="UniProtKB-SubCell"/>
</dbReference>
<dbReference type="GO" id="GO:0019773">
    <property type="term" value="C:proteasome core complex, alpha-subunit complex"/>
    <property type="evidence" value="ECO:0007669"/>
    <property type="project" value="UniProtKB-UniRule"/>
</dbReference>
<dbReference type="GO" id="GO:0004298">
    <property type="term" value="F:threonine-type endopeptidase activity"/>
    <property type="evidence" value="ECO:0007669"/>
    <property type="project" value="InterPro"/>
</dbReference>
<dbReference type="GO" id="GO:0019941">
    <property type="term" value="P:modification-dependent protein catabolic process"/>
    <property type="evidence" value="ECO:0007669"/>
    <property type="project" value="UniProtKB-UniRule"/>
</dbReference>
<dbReference type="GO" id="GO:0010498">
    <property type="term" value="P:proteasomal protein catabolic process"/>
    <property type="evidence" value="ECO:0007669"/>
    <property type="project" value="UniProtKB-UniRule"/>
</dbReference>
<dbReference type="CDD" id="cd01901">
    <property type="entry name" value="Ntn_hydrolase"/>
    <property type="match status" value="1"/>
</dbReference>
<dbReference type="FunFam" id="3.60.20.10:FF:000023">
    <property type="entry name" value="Proteasome subunit alpha"/>
    <property type="match status" value="1"/>
</dbReference>
<dbReference type="Gene3D" id="3.60.20.10">
    <property type="entry name" value="Glutamine Phosphoribosylpyrophosphate, subunit 1, domain 1"/>
    <property type="match status" value="1"/>
</dbReference>
<dbReference type="HAMAP" id="MF_00289_B">
    <property type="entry name" value="Proteasome_A_B"/>
    <property type="match status" value="1"/>
</dbReference>
<dbReference type="InterPro" id="IPR029055">
    <property type="entry name" value="Ntn_hydrolases_N"/>
</dbReference>
<dbReference type="InterPro" id="IPR050115">
    <property type="entry name" value="Proteasome_alpha"/>
</dbReference>
<dbReference type="InterPro" id="IPR023332">
    <property type="entry name" value="Proteasome_alpha-type"/>
</dbReference>
<dbReference type="InterPro" id="IPR022296">
    <property type="entry name" value="Proteasome_asu_bac"/>
</dbReference>
<dbReference type="InterPro" id="IPR001353">
    <property type="entry name" value="Proteasome_sua/b"/>
</dbReference>
<dbReference type="NCBIfam" id="TIGR03691">
    <property type="entry name" value="20S_bact_alpha"/>
    <property type="match status" value="1"/>
</dbReference>
<dbReference type="PANTHER" id="PTHR11599">
    <property type="entry name" value="PROTEASOME SUBUNIT ALPHA/BETA"/>
    <property type="match status" value="1"/>
</dbReference>
<dbReference type="Pfam" id="PF00227">
    <property type="entry name" value="Proteasome"/>
    <property type="match status" value="1"/>
</dbReference>
<dbReference type="SUPFAM" id="SSF56235">
    <property type="entry name" value="N-terminal nucleophile aminohydrolases (Ntn hydrolases)"/>
    <property type="match status" value="1"/>
</dbReference>
<dbReference type="PROSITE" id="PS51475">
    <property type="entry name" value="PROTEASOME_ALPHA_2"/>
    <property type="match status" value="1"/>
</dbReference>
<feature type="chain" id="PRO_0000397168" description="Proteasome subunit alpha">
    <location>
        <begin position="1"/>
        <end position="259"/>
    </location>
</feature>
<feature type="region of interest" description="Disordered" evidence="2">
    <location>
        <begin position="233"/>
        <end position="259"/>
    </location>
</feature>
<feature type="compositionally biased region" description="Low complexity" evidence="2">
    <location>
        <begin position="233"/>
        <end position="243"/>
    </location>
</feature>
<feature type="compositionally biased region" description="Basic and acidic residues" evidence="2">
    <location>
        <begin position="244"/>
        <end position="259"/>
    </location>
</feature>
<protein>
    <recommendedName>
        <fullName evidence="1">Proteasome subunit alpha</fullName>
    </recommendedName>
    <alternativeName>
        <fullName evidence="1">20S proteasome alpha subunit</fullName>
    </alternativeName>
    <alternativeName>
        <fullName evidence="1">Proteasome core protein PrcA</fullName>
    </alternativeName>
</protein>
<keyword id="KW-0963">Cytoplasm</keyword>
<keyword id="KW-0647">Proteasome</keyword>
<proteinExistence type="inferred from homology"/>
<gene>
    <name evidence="1" type="primary">prcA</name>
    <name type="ordered locus">ROP_05810</name>
</gene>
<comment type="function">
    <text evidence="1">Component of the proteasome core, a large protease complex with broad specificity involved in protein degradation.</text>
</comment>
<comment type="activity regulation">
    <text evidence="1">The formation of the proteasomal ATPase ARC-20S proteasome complex, likely via the docking of the C-termini of ARC into the intersubunit pockets in the alpha-rings, may trigger opening of the gate for substrate entry. Interconversion between the open-gate and close-gate conformations leads to a dynamic regulation of the 20S proteasome proteolysis activity.</text>
</comment>
<comment type="pathway">
    <text evidence="1">Protein degradation; proteasomal Pup-dependent pathway.</text>
</comment>
<comment type="subunit">
    <text evidence="1">The 20S proteasome core is composed of 14 alpha and 14 beta subunits that assemble into four stacked heptameric rings, resulting in a barrel-shaped structure. The two inner rings, each composed of seven catalytic beta subunits, are sandwiched by two outer rings, each composed of seven alpha subunits. The catalytic chamber with the active sites is on the inside of the barrel. Has a gated structure, the ends of the cylinder being occluded by the N-termini of the alpha-subunits. Is capped by the proteasome-associated ATPase, ARC.</text>
</comment>
<comment type="subcellular location">
    <subcellularLocation>
        <location evidence="1">Cytoplasm</location>
    </subcellularLocation>
</comment>
<comment type="similarity">
    <text evidence="1">Belongs to the peptidase T1A family.</text>
</comment>
<name>PSA_RHOOB</name>
<evidence type="ECO:0000255" key="1">
    <source>
        <dbReference type="HAMAP-Rule" id="MF_00289"/>
    </source>
</evidence>
<evidence type="ECO:0000256" key="2">
    <source>
        <dbReference type="SAM" id="MobiDB-lite"/>
    </source>
</evidence>
<reference key="1">
    <citation type="submission" date="2009-03" db="EMBL/GenBank/DDBJ databases">
        <title>Comparison of the complete genome sequences of Rhodococcus erythropolis PR4 and Rhodococcus opacus B4.</title>
        <authorList>
            <person name="Takarada H."/>
            <person name="Sekine M."/>
            <person name="Hosoyama A."/>
            <person name="Yamada R."/>
            <person name="Fujisawa T."/>
            <person name="Omata S."/>
            <person name="Shimizu A."/>
            <person name="Tsukatani N."/>
            <person name="Tanikawa S."/>
            <person name="Fujita N."/>
            <person name="Harayama S."/>
        </authorList>
    </citation>
    <scope>NUCLEOTIDE SEQUENCE [LARGE SCALE GENOMIC DNA]</scope>
    <source>
        <strain>B4</strain>
    </source>
</reference>
<sequence length="259" mass="28220">MTMPYYASAEQIMRDRSELARKGIARGRSVVVLTFRDGVLFVAENPSTALHKVSELYDRLGFAAVGKYNEFENLRRAGIVHADMRGYSYDRRDVTGRSLANAYAQTLGTIFTEQPKPYEVEICVAEVGRVGSPKAPQLYRITYDGSIVDEQHFVVMGGTTEPIATAMRESYRADLDLEAAVGIAVNALRQGGAGEGEKRNVDVASLEVAVLDQSRPRRAFRRIAGAALEQLVPAAPAAASESAPEPKPDTETKPADPQD</sequence>